<evidence type="ECO:0000255" key="1">
    <source>
        <dbReference type="HAMAP-Rule" id="MF_00388"/>
    </source>
</evidence>
<reference key="1">
    <citation type="journal article" date="2003" name="Proc. Natl. Acad. Sci. U.S.A.">
        <title>The complete genome sequence of Chromobacterium violaceum reveals remarkable and exploitable bacterial adaptability.</title>
        <authorList>
            <person name="Vasconcelos A.T.R."/>
            <person name="de Almeida D.F."/>
            <person name="Hungria M."/>
            <person name="Guimaraes C.T."/>
            <person name="Antonio R.V."/>
            <person name="Almeida F.C."/>
            <person name="de Almeida L.G.P."/>
            <person name="de Almeida R."/>
            <person name="Alves-Gomes J.A."/>
            <person name="Andrade E.M."/>
            <person name="Araripe J."/>
            <person name="de Araujo M.F.F."/>
            <person name="Astolfi-Filho S."/>
            <person name="Azevedo V."/>
            <person name="Baptista A.J."/>
            <person name="Bataus L.A.M."/>
            <person name="Batista J.S."/>
            <person name="Belo A."/>
            <person name="van den Berg C."/>
            <person name="Bogo M."/>
            <person name="Bonatto S."/>
            <person name="Bordignon J."/>
            <person name="Brigido M.M."/>
            <person name="Brito C.A."/>
            <person name="Brocchi M."/>
            <person name="Burity H.A."/>
            <person name="Camargo A.A."/>
            <person name="Cardoso D.D.P."/>
            <person name="Carneiro N.P."/>
            <person name="Carraro D.M."/>
            <person name="Carvalho C.M.B."/>
            <person name="Cascardo J.C.M."/>
            <person name="Cavada B.S."/>
            <person name="Chueire L.M.O."/>
            <person name="Creczynski-Pasa T.B."/>
            <person name="Cunha-Junior N.C."/>
            <person name="Fagundes N."/>
            <person name="Falcao C.L."/>
            <person name="Fantinatti F."/>
            <person name="Farias I.P."/>
            <person name="Felipe M.S.S."/>
            <person name="Ferrari L.P."/>
            <person name="Ferro J.A."/>
            <person name="Ferro M.I.T."/>
            <person name="Franco G.R."/>
            <person name="Freitas N.S.A."/>
            <person name="Furlan L.R."/>
            <person name="Gazzinelli R.T."/>
            <person name="Gomes E.A."/>
            <person name="Goncalves P.R."/>
            <person name="Grangeiro T.B."/>
            <person name="Grattapaglia D."/>
            <person name="Grisard E.C."/>
            <person name="Hanna E.S."/>
            <person name="Jardim S.N."/>
            <person name="Laurino J."/>
            <person name="Leoi L.C.T."/>
            <person name="Lima L.F.A."/>
            <person name="Loureiro M.F."/>
            <person name="Lyra M.C.C.P."/>
            <person name="Madeira H.M.F."/>
            <person name="Manfio G.P."/>
            <person name="Maranhao A.Q."/>
            <person name="Martins W.S."/>
            <person name="di Mauro S.M.Z."/>
            <person name="de Medeiros S.R.B."/>
            <person name="Meissner R.V."/>
            <person name="Moreira M.A.M."/>
            <person name="Nascimento F.F."/>
            <person name="Nicolas M.F."/>
            <person name="Oliveira J.G."/>
            <person name="Oliveira S.C."/>
            <person name="Paixao R.F.C."/>
            <person name="Parente J.A."/>
            <person name="Pedrosa F.O."/>
            <person name="Pena S.D.J."/>
            <person name="Pereira J.O."/>
            <person name="Pereira M."/>
            <person name="Pinto L.S.R.C."/>
            <person name="Pinto L.S."/>
            <person name="Porto J.I.R."/>
            <person name="Potrich D.P."/>
            <person name="Ramalho-Neto C.E."/>
            <person name="Reis A.M.M."/>
            <person name="Rigo L.U."/>
            <person name="Rondinelli E."/>
            <person name="Santos E.B.P."/>
            <person name="Santos F.R."/>
            <person name="Schneider M.P.C."/>
            <person name="Seuanez H.N."/>
            <person name="Silva A.M.R."/>
            <person name="da Silva A.L.C."/>
            <person name="Silva D.W."/>
            <person name="Silva R."/>
            <person name="Simoes I.C."/>
            <person name="Simon D."/>
            <person name="Soares C.M.A."/>
            <person name="Soares R.B.A."/>
            <person name="Souza E.M."/>
            <person name="Souza K.R.L."/>
            <person name="Souza R.C."/>
            <person name="Steffens M.B.R."/>
            <person name="Steindel M."/>
            <person name="Teixeira S.R."/>
            <person name="Urmenyi T."/>
            <person name="Vettore A."/>
            <person name="Wassem R."/>
            <person name="Zaha A."/>
            <person name="Simpson A.J.G."/>
        </authorList>
    </citation>
    <scope>NUCLEOTIDE SEQUENCE [LARGE SCALE GENOMIC DNA]</scope>
    <source>
        <strain>ATCC 12472 / DSM 30191 / JCM 1249 / CCUG 213 / NBRC 12614 / NCIMB 9131 / NCTC 9757 / MK</strain>
    </source>
</reference>
<keyword id="KW-0378">Hydrolase</keyword>
<keyword id="KW-0441">Lipid A biosynthesis</keyword>
<keyword id="KW-0444">Lipid biosynthesis</keyword>
<keyword id="KW-0443">Lipid metabolism</keyword>
<keyword id="KW-0479">Metal-binding</keyword>
<keyword id="KW-1185">Reference proteome</keyword>
<keyword id="KW-0862">Zinc</keyword>
<name>LPXC_CHRVO</name>
<gene>
    <name evidence="1" type="primary">lpxC</name>
    <name type="ordered locus">CV_4337</name>
</gene>
<feature type="chain" id="PRO_0000253659" description="UDP-3-O-acyl-N-acetylglucosamine deacetylase">
    <location>
        <begin position="1"/>
        <end position="304"/>
    </location>
</feature>
<feature type="active site" description="Proton donor" evidence="1">
    <location>
        <position position="265"/>
    </location>
</feature>
<feature type="binding site" evidence="1">
    <location>
        <position position="79"/>
    </location>
    <ligand>
        <name>Zn(2+)</name>
        <dbReference type="ChEBI" id="CHEBI:29105"/>
    </ligand>
</feature>
<feature type="binding site" evidence="1">
    <location>
        <position position="238"/>
    </location>
    <ligand>
        <name>Zn(2+)</name>
        <dbReference type="ChEBI" id="CHEBI:29105"/>
    </ligand>
</feature>
<feature type="binding site" evidence="1">
    <location>
        <position position="242"/>
    </location>
    <ligand>
        <name>Zn(2+)</name>
        <dbReference type="ChEBI" id="CHEBI:29105"/>
    </ligand>
</feature>
<dbReference type="EC" id="3.5.1.108" evidence="1"/>
<dbReference type="EMBL" id="AE016825">
    <property type="protein sequence ID" value="AAQ61996.1"/>
    <property type="molecule type" value="Genomic_DNA"/>
</dbReference>
<dbReference type="SMR" id="Q7NQ05"/>
<dbReference type="STRING" id="243365.CV_4337"/>
<dbReference type="KEGG" id="cvi:CV_4337"/>
<dbReference type="eggNOG" id="COG0774">
    <property type="taxonomic scope" value="Bacteria"/>
</dbReference>
<dbReference type="HOGENOM" id="CLU_046528_1_0_4"/>
<dbReference type="OrthoDB" id="9802746at2"/>
<dbReference type="UniPathway" id="UPA00359">
    <property type="reaction ID" value="UER00478"/>
</dbReference>
<dbReference type="Proteomes" id="UP000001424">
    <property type="component" value="Chromosome"/>
</dbReference>
<dbReference type="GO" id="GO:0016020">
    <property type="term" value="C:membrane"/>
    <property type="evidence" value="ECO:0007669"/>
    <property type="project" value="GOC"/>
</dbReference>
<dbReference type="GO" id="GO:0046872">
    <property type="term" value="F:metal ion binding"/>
    <property type="evidence" value="ECO:0007669"/>
    <property type="project" value="UniProtKB-KW"/>
</dbReference>
<dbReference type="GO" id="GO:0103117">
    <property type="term" value="F:UDP-3-O-acyl-N-acetylglucosamine deacetylase activity"/>
    <property type="evidence" value="ECO:0007669"/>
    <property type="project" value="UniProtKB-UniRule"/>
</dbReference>
<dbReference type="GO" id="GO:0009245">
    <property type="term" value="P:lipid A biosynthetic process"/>
    <property type="evidence" value="ECO:0007669"/>
    <property type="project" value="UniProtKB-UniRule"/>
</dbReference>
<dbReference type="Gene3D" id="3.30.230.20">
    <property type="entry name" value="lpxc deacetylase, domain 1"/>
    <property type="match status" value="1"/>
</dbReference>
<dbReference type="Gene3D" id="3.30.1700.10">
    <property type="entry name" value="lpxc deacetylase, domain 2"/>
    <property type="match status" value="1"/>
</dbReference>
<dbReference type="HAMAP" id="MF_00388">
    <property type="entry name" value="LpxC"/>
    <property type="match status" value="1"/>
</dbReference>
<dbReference type="InterPro" id="IPR020568">
    <property type="entry name" value="Ribosomal_Su5_D2-typ_SF"/>
</dbReference>
<dbReference type="InterPro" id="IPR004463">
    <property type="entry name" value="UDP-acyl_GlcNac_deAcase"/>
</dbReference>
<dbReference type="InterPro" id="IPR011334">
    <property type="entry name" value="UDP-acyl_GlcNac_deAcase_C"/>
</dbReference>
<dbReference type="InterPro" id="IPR015870">
    <property type="entry name" value="UDP-acyl_N-AcGlcN_deAcase_N"/>
</dbReference>
<dbReference type="NCBIfam" id="TIGR00325">
    <property type="entry name" value="lpxC"/>
    <property type="match status" value="1"/>
</dbReference>
<dbReference type="PANTHER" id="PTHR33694">
    <property type="entry name" value="UDP-3-O-ACYL-N-ACETYLGLUCOSAMINE DEACETYLASE 1, MITOCHONDRIAL-RELATED"/>
    <property type="match status" value="1"/>
</dbReference>
<dbReference type="PANTHER" id="PTHR33694:SF1">
    <property type="entry name" value="UDP-3-O-ACYL-N-ACETYLGLUCOSAMINE DEACETYLASE 1, MITOCHONDRIAL-RELATED"/>
    <property type="match status" value="1"/>
</dbReference>
<dbReference type="Pfam" id="PF03331">
    <property type="entry name" value="LpxC"/>
    <property type="match status" value="1"/>
</dbReference>
<dbReference type="SUPFAM" id="SSF54211">
    <property type="entry name" value="Ribosomal protein S5 domain 2-like"/>
    <property type="match status" value="2"/>
</dbReference>
<protein>
    <recommendedName>
        <fullName evidence="1">UDP-3-O-acyl-N-acetylglucosamine deacetylase</fullName>
        <shortName evidence="1">UDP-3-O-acyl-GlcNAc deacetylase</shortName>
        <ecNumber evidence="1">3.5.1.108</ecNumber>
    </recommendedName>
    <alternativeName>
        <fullName evidence="1">UDP-3-O-[R-3-hydroxymyristoyl]-N-acetylglucosamine deacetylase</fullName>
    </alternativeName>
</protein>
<accession>Q7NQ05</accession>
<organism>
    <name type="scientific">Chromobacterium violaceum (strain ATCC 12472 / DSM 30191 / JCM 1249 / CCUG 213 / NBRC 12614 / NCIMB 9131 / NCTC 9757 / MK)</name>
    <dbReference type="NCBI Taxonomy" id="243365"/>
    <lineage>
        <taxon>Bacteria</taxon>
        <taxon>Pseudomonadati</taxon>
        <taxon>Pseudomonadota</taxon>
        <taxon>Betaproteobacteria</taxon>
        <taxon>Neisseriales</taxon>
        <taxon>Chromobacteriaceae</taxon>
        <taxon>Chromobacterium</taxon>
    </lineage>
</organism>
<comment type="function">
    <text evidence="1">Catalyzes the hydrolysis of UDP-3-O-myristoyl-N-acetylglucosamine to form UDP-3-O-myristoylglucosamine and acetate, the committed step in lipid A biosynthesis.</text>
</comment>
<comment type="catalytic activity">
    <reaction evidence="1">
        <text>a UDP-3-O-[(3R)-3-hydroxyacyl]-N-acetyl-alpha-D-glucosamine + H2O = a UDP-3-O-[(3R)-3-hydroxyacyl]-alpha-D-glucosamine + acetate</text>
        <dbReference type="Rhea" id="RHEA:67816"/>
        <dbReference type="ChEBI" id="CHEBI:15377"/>
        <dbReference type="ChEBI" id="CHEBI:30089"/>
        <dbReference type="ChEBI" id="CHEBI:137740"/>
        <dbReference type="ChEBI" id="CHEBI:173225"/>
        <dbReference type="EC" id="3.5.1.108"/>
    </reaction>
</comment>
<comment type="cofactor">
    <cofactor evidence="1">
        <name>Zn(2+)</name>
        <dbReference type="ChEBI" id="CHEBI:29105"/>
    </cofactor>
</comment>
<comment type="pathway">
    <text evidence="1">Glycolipid biosynthesis; lipid IV(A) biosynthesis; lipid IV(A) from (3R)-3-hydroxytetradecanoyl-[acyl-carrier-protein] and UDP-N-acetyl-alpha-D-glucosamine: step 2/6.</text>
</comment>
<comment type="similarity">
    <text evidence="1">Belongs to the LpxC family.</text>
</comment>
<sequence length="304" mass="33829">MILQRTLKQAISATGVGLHSGERVKLTLLPAPPDTGIVFRRTDLPEPVDVKVEPSLVNDTRLSSTLVTDTGVRVGTIEHLMSAFAGFGIDNLVVEVTAAEIPIMDGSAAPFLYLLQTAGVVDQPKKKRFIRVKQSVMVEDRGVWVRLDPHDGFKITLSIEFNHPAFNRAPQTVEVDFARHSYMDEISRARTFGFMHEVEYMRNHGLGRGGSLDNAIVIDDEYVLNPEGLRFPDEFVRHKILDAIGDLYIVGHPLIAAFSGHKSGHAMNNRLLRKLLETPEAWEFASFDDPLDAPSSFHQLPPQE</sequence>
<proteinExistence type="inferred from homology"/>